<accession>B5RHE5</accession>
<dbReference type="EC" id="3.2.2.9" evidence="1"/>
<dbReference type="EMBL" id="AM933173">
    <property type="protein sequence ID" value="CAR36118.1"/>
    <property type="molecule type" value="Genomic_DNA"/>
</dbReference>
<dbReference type="RefSeq" id="WP_000689824.1">
    <property type="nucleotide sequence ID" value="NC_011274.1"/>
</dbReference>
<dbReference type="SMR" id="B5RHE5"/>
<dbReference type="KEGG" id="seg:SG0211"/>
<dbReference type="HOGENOM" id="CLU_031248_2_2_6"/>
<dbReference type="UniPathway" id="UPA00904">
    <property type="reaction ID" value="UER00871"/>
</dbReference>
<dbReference type="Proteomes" id="UP000008321">
    <property type="component" value="Chromosome"/>
</dbReference>
<dbReference type="GO" id="GO:0005829">
    <property type="term" value="C:cytosol"/>
    <property type="evidence" value="ECO:0007669"/>
    <property type="project" value="TreeGrafter"/>
</dbReference>
<dbReference type="GO" id="GO:0008782">
    <property type="term" value="F:adenosylhomocysteine nucleosidase activity"/>
    <property type="evidence" value="ECO:0007669"/>
    <property type="project" value="UniProtKB-UniRule"/>
</dbReference>
<dbReference type="GO" id="GO:0008930">
    <property type="term" value="F:methylthioadenosine nucleosidase activity"/>
    <property type="evidence" value="ECO:0007669"/>
    <property type="project" value="UniProtKB-UniRule"/>
</dbReference>
<dbReference type="GO" id="GO:0019509">
    <property type="term" value="P:L-methionine salvage from methylthioadenosine"/>
    <property type="evidence" value="ECO:0007669"/>
    <property type="project" value="UniProtKB-UniRule"/>
</dbReference>
<dbReference type="GO" id="GO:0019284">
    <property type="term" value="P:L-methionine salvage from S-adenosylmethionine"/>
    <property type="evidence" value="ECO:0007669"/>
    <property type="project" value="TreeGrafter"/>
</dbReference>
<dbReference type="GO" id="GO:0046124">
    <property type="term" value="P:purine deoxyribonucleoside catabolic process"/>
    <property type="evidence" value="ECO:0007669"/>
    <property type="project" value="UniProtKB-UniRule"/>
</dbReference>
<dbReference type="CDD" id="cd09008">
    <property type="entry name" value="MTAN"/>
    <property type="match status" value="1"/>
</dbReference>
<dbReference type="FunFam" id="3.40.50.1580:FF:000001">
    <property type="entry name" value="MTA/SAH nucleosidase family protein"/>
    <property type="match status" value="1"/>
</dbReference>
<dbReference type="Gene3D" id="3.40.50.1580">
    <property type="entry name" value="Nucleoside phosphorylase domain"/>
    <property type="match status" value="1"/>
</dbReference>
<dbReference type="HAMAP" id="MF_01684">
    <property type="entry name" value="Salvage_MtnN"/>
    <property type="match status" value="1"/>
</dbReference>
<dbReference type="InterPro" id="IPR010049">
    <property type="entry name" value="MTA_SAH_Nsdase"/>
</dbReference>
<dbReference type="InterPro" id="IPR000845">
    <property type="entry name" value="Nucleoside_phosphorylase_d"/>
</dbReference>
<dbReference type="InterPro" id="IPR035994">
    <property type="entry name" value="Nucleoside_phosphorylase_sf"/>
</dbReference>
<dbReference type="NCBIfam" id="TIGR01704">
    <property type="entry name" value="MTA_SAH-Nsdase"/>
    <property type="match status" value="1"/>
</dbReference>
<dbReference type="NCBIfam" id="NF004079">
    <property type="entry name" value="PRK05584.1"/>
    <property type="match status" value="1"/>
</dbReference>
<dbReference type="PANTHER" id="PTHR46832">
    <property type="entry name" value="5'-METHYLTHIOADENOSINE/S-ADENOSYLHOMOCYSTEINE NUCLEOSIDASE"/>
    <property type="match status" value="1"/>
</dbReference>
<dbReference type="PANTHER" id="PTHR46832:SF1">
    <property type="entry name" value="5'-METHYLTHIOADENOSINE_S-ADENOSYLHOMOCYSTEINE NUCLEOSIDASE"/>
    <property type="match status" value="1"/>
</dbReference>
<dbReference type="Pfam" id="PF01048">
    <property type="entry name" value="PNP_UDP_1"/>
    <property type="match status" value="1"/>
</dbReference>
<dbReference type="SUPFAM" id="SSF53167">
    <property type="entry name" value="Purine and uridine phosphorylases"/>
    <property type="match status" value="1"/>
</dbReference>
<evidence type="ECO:0000255" key="1">
    <source>
        <dbReference type="HAMAP-Rule" id="MF_01684"/>
    </source>
</evidence>
<gene>
    <name evidence="1" type="primary">mtnN</name>
    <name type="ordered locus">SG0211</name>
</gene>
<organism>
    <name type="scientific">Salmonella gallinarum (strain 287/91 / NCTC 13346)</name>
    <dbReference type="NCBI Taxonomy" id="550538"/>
    <lineage>
        <taxon>Bacteria</taxon>
        <taxon>Pseudomonadati</taxon>
        <taxon>Pseudomonadota</taxon>
        <taxon>Gammaproteobacteria</taxon>
        <taxon>Enterobacterales</taxon>
        <taxon>Enterobacteriaceae</taxon>
        <taxon>Salmonella</taxon>
    </lineage>
</organism>
<sequence>MKIGIIGAMEEEVTLLRDKIDNRQTITLGGCEIYTGQLNGTEVALLKSGIGKVAAALGATLLLEHCKPDVIINTGSAGGLASTLKVGDIVVSDEARYHDADVTAFGYEYGQLPGCPAGFKADDKLIAAAESCIRELNLNAVRGLIVSGDAFINGSVGLAKIRHNFPDAVAVEMEATAIAHVCYNFSVPFVVVRAISDVADQQSHLSFDEFLAVAAKQSTLMVETLVQKLAHG</sequence>
<feature type="chain" id="PRO_0000359331" description="5'-methylthioadenosine/S-adenosylhomocysteine nucleosidase">
    <location>
        <begin position="1"/>
        <end position="232"/>
    </location>
</feature>
<feature type="active site" description="Proton acceptor" evidence="1">
    <location>
        <position position="12"/>
    </location>
</feature>
<feature type="active site" description="Proton donor" evidence="1">
    <location>
        <position position="197"/>
    </location>
</feature>
<feature type="binding site" evidence="1">
    <location>
        <position position="78"/>
    </location>
    <ligand>
        <name>substrate</name>
    </ligand>
</feature>
<feature type="binding site" evidence="1">
    <location>
        <position position="152"/>
    </location>
    <ligand>
        <name>substrate</name>
    </ligand>
</feature>
<feature type="binding site" evidence="1">
    <location>
        <begin position="173"/>
        <end position="174"/>
    </location>
    <ligand>
        <name>substrate</name>
    </ligand>
</feature>
<proteinExistence type="inferred from homology"/>
<keyword id="KW-0028">Amino-acid biosynthesis</keyword>
<keyword id="KW-0378">Hydrolase</keyword>
<keyword id="KW-0486">Methionine biosynthesis</keyword>
<comment type="function">
    <text evidence="1">Catalyzes the irreversible cleavage of the glycosidic bond in both 5'-methylthioadenosine (MTA) and S-adenosylhomocysteine (SAH/AdoHcy) to adenine and the corresponding thioribose, 5'-methylthioribose and S-ribosylhomocysteine, respectively. Also cleaves 5'-deoxyadenosine, a toxic by-product of radical S-adenosylmethionine (SAM) enzymes, into 5-deoxyribose and adenine. Thus, is required for in vivo function of the radical SAM enzymes biotin synthase and lipoic acid synthase, that are inhibited by 5'-deoxyadenosine accumulation.</text>
</comment>
<comment type="catalytic activity">
    <reaction evidence="1">
        <text>S-adenosyl-L-homocysteine + H2O = S-(5-deoxy-D-ribos-5-yl)-L-homocysteine + adenine</text>
        <dbReference type="Rhea" id="RHEA:17805"/>
        <dbReference type="ChEBI" id="CHEBI:15377"/>
        <dbReference type="ChEBI" id="CHEBI:16708"/>
        <dbReference type="ChEBI" id="CHEBI:57856"/>
        <dbReference type="ChEBI" id="CHEBI:58195"/>
        <dbReference type="EC" id="3.2.2.9"/>
    </reaction>
</comment>
<comment type="catalytic activity">
    <reaction evidence="1">
        <text>S-methyl-5'-thioadenosine + H2O = 5-(methylsulfanyl)-D-ribose + adenine</text>
        <dbReference type="Rhea" id="RHEA:13617"/>
        <dbReference type="ChEBI" id="CHEBI:15377"/>
        <dbReference type="ChEBI" id="CHEBI:16708"/>
        <dbReference type="ChEBI" id="CHEBI:17509"/>
        <dbReference type="ChEBI" id="CHEBI:78440"/>
        <dbReference type="EC" id="3.2.2.9"/>
    </reaction>
</comment>
<comment type="catalytic activity">
    <reaction evidence="1">
        <text>5'-deoxyadenosine + H2O = 5-deoxy-D-ribose + adenine</text>
        <dbReference type="Rhea" id="RHEA:29859"/>
        <dbReference type="ChEBI" id="CHEBI:15377"/>
        <dbReference type="ChEBI" id="CHEBI:16708"/>
        <dbReference type="ChEBI" id="CHEBI:17319"/>
        <dbReference type="ChEBI" id="CHEBI:149540"/>
        <dbReference type="EC" id="3.2.2.9"/>
    </reaction>
    <physiologicalReaction direction="left-to-right" evidence="1">
        <dbReference type="Rhea" id="RHEA:29860"/>
    </physiologicalReaction>
</comment>
<comment type="pathway">
    <text evidence="1">Amino-acid biosynthesis; L-methionine biosynthesis via salvage pathway; S-methyl-5-thio-alpha-D-ribose 1-phosphate from S-methyl-5'-thioadenosine (hydrolase route): step 1/2.</text>
</comment>
<comment type="subunit">
    <text evidence="1">Homodimer.</text>
</comment>
<comment type="similarity">
    <text evidence="1">Belongs to the PNP/UDP phosphorylase family. MtnN subfamily.</text>
</comment>
<protein>
    <recommendedName>
        <fullName evidence="1">5'-methylthioadenosine/S-adenosylhomocysteine nucleosidase</fullName>
        <shortName evidence="1">MTA/SAH nucleosidase</shortName>
        <shortName evidence="1">MTAN</shortName>
        <ecNumber evidence="1">3.2.2.9</ecNumber>
    </recommendedName>
    <alternativeName>
        <fullName evidence="1">5'-deoxyadenosine nucleosidase</fullName>
        <shortName evidence="1">DOA nucleosidase</shortName>
        <shortName evidence="1">dAdo nucleosidase</shortName>
    </alternativeName>
    <alternativeName>
        <fullName evidence="1">5'-methylthioadenosine nucleosidase</fullName>
        <shortName evidence="1">MTA nucleosidase</shortName>
    </alternativeName>
    <alternativeName>
        <fullName evidence="1">S-adenosylhomocysteine nucleosidase</fullName>
        <shortName evidence="1">AdoHcy nucleosidase</shortName>
        <shortName evidence="1">SAH nucleosidase</shortName>
        <shortName evidence="1">SRH nucleosidase</shortName>
    </alternativeName>
</protein>
<reference key="1">
    <citation type="journal article" date="2008" name="Genome Res.">
        <title>Comparative genome analysis of Salmonella enteritidis PT4 and Salmonella gallinarum 287/91 provides insights into evolutionary and host adaptation pathways.</title>
        <authorList>
            <person name="Thomson N.R."/>
            <person name="Clayton D.J."/>
            <person name="Windhorst D."/>
            <person name="Vernikos G."/>
            <person name="Davidson S."/>
            <person name="Churcher C."/>
            <person name="Quail M.A."/>
            <person name="Stevens M."/>
            <person name="Jones M.A."/>
            <person name="Watson M."/>
            <person name="Barron A."/>
            <person name="Layton A."/>
            <person name="Pickard D."/>
            <person name="Kingsley R.A."/>
            <person name="Bignell A."/>
            <person name="Clark L."/>
            <person name="Harris B."/>
            <person name="Ormond D."/>
            <person name="Abdellah Z."/>
            <person name="Brooks K."/>
            <person name="Cherevach I."/>
            <person name="Chillingworth T."/>
            <person name="Woodward J."/>
            <person name="Norberczak H."/>
            <person name="Lord A."/>
            <person name="Arrowsmith C."/>
            <person name="Jagels K."/>
            <person name="Moule S."/>
            <person name="Mungall K."/>
            <person name="Saunders M."/>
            <person name="Whitehead S."/>
            <person name="Chabalgoity J.A."/>
            <person name="Maskell D."/>
            <person name="Humphreys T."/>
            <person name="Roberts M."/>
            <person name="Barrow P.A."/>
            <person name="Dougan G."/>
            <person name="Parkhill J."/>
        </authorList>
    </citation>
    <scope>NUCLEOTIDE SEQUENCE [LARGE SCALE GENOMIC DNA]</scope>
    <source>
        <strain>287/91 / NCTC 13346</strain>
    </source>
</reference>
<name>MTNN_SALG2</name>